<accession>A9AB20</accession>
<protein>
    <recommendedName>
        <fullName evidence="1">tRNA (pseudouridine(54)-N(1))-methyltransferase</fullName>
        <ecNumber evidence="1">2.1.1.257</ecNumber>
    </recommendedName>
</protein>
<name>TRMY_METM6</name>
<comment type="function">
    <text evidence="1">Specifically catalyzes the N1-methylation of pseudouridine at position 54 (Psi54) in tRNAs.</text>
</comment>
<comment type="catalytic activity">
    <reaction evidence="1">
        <text>pseudouridine(54) in tRNA + S-adenosyl-L-methionine = N(1)-methylpseudouridine(54) in tRNA + S-adenosyl-L-homocysteine + H(+)</text>
        <dbReference type="Rhea" id="RHEA:55292"/>
        <dbReference type="Rhea" id="RHEA-COMP:14140"/>
        <dbReference type="Rhea" id="RHEA-COMP:14141"/>
        <dbReference type="ChEBI" id="CHEBI:15378"/>
        <dbReference type="ChEBI" id="CHEBI:57856"/>
        <dbReference type="ChEBI" id="CHEBI:59789"/>
        <dbReference type="ChEBI" id="CHEBI:65314"/>
        <dbReference type="ChEBI" id="CHEBI:74890"/>
        <dbReference type="EC" id="2.1.1.257"/>
    </reaction>
</comment>
<comment type="subunit">
    <text evidence="1">Homodimer.</text>
</comment>
<comment type="subcellular location">
    <subcellularLocation>
        <location evidence="1">Cytoplasm</location>
    </subcellularLocation>
</comment>
<comment type="similarity">
    <text evidence="1">Belongs to the methyltransferase superfamily. TrmY family.</text>
</comment>
<gene>
    <name evidence="1" type="primary">trmY</name>
    <name type="ordered locus">MmarC6_1731</name>
</gene>
<feature type="chain" id="PRO_1000129781" description="tRNA (pseudouridine(54)-N(1))-methyltransferase">
    <location>
        <begin position="1"/>
        <end position="198"/>
    </location>
</feature>
<feature type="binding site" evidence="1">
    <location>
        <position position="130"/>
    </location>
    <ligand>
        <name>S-adenosyl-L-methionine</name>
        <dbReference type="ChEBI" id="CHEBI:59789"/>
    </ligand>
</feature>
<feature type="binding site" evidence="1">
    <location>
        <position position="153"/>
    </location>
    <ligand>
        <name>S-adenosyl-L-methionine</name>
        <dbReference type="ChEBI" id="CHEBI:59789"/>
    </ligand>
</feature>
<feature type="binding site" evidence="1">
    <location>
        <begin position="176"/>
        <end position="181"/>
    </location>
    <ligand>
        <name>S-adenosyl-L-methionine</name>
        <dbReference type="ChEBI" id="CHEBI:59789"/>
    </ligand>
</feature>
<feature type="binding site" evidence="1">
    <location>
        <position position="186"/>
    </location>
    <ligand>
        <name>S-adenosyl-L-methionine</name>
        <dbReference type="ChEBI" id="CHEBI:59789"/>
    </ligand>
</feature>
<reference key="1">
    <citation type="submission" date="2007-10" db="EMBL/GenBank/DDBJ databases">
        <title>Complete sequence of Methanococcus maripaludis C6.</title>
        <authorList>
            <consortium name="US DOE Joint Genome Institute"/>
            <person name="Copeland A."/>
            <person name="Lucas S."/>
            <person name="Lapidus A."/>
            <person name="Barry K."/>
            <person name="Glavina del Rio T."/>
            <person name="Dalin E."/>
            <person name="Tice H."/>
            <person name="Pitluck S."/>
            <person name="Clum A."/>
            <person name="Schmutz J."/>
            <person name="Larimer F."/>
            <person name="Land M."/>
            <person name="Hauser L."/>
            <person name="Kyrpides N."/>
            <person name="Mikhailova N."/>
            <person name="Sieprawska-Lupa M."/>
            <person name="Whitman W.B."/>
            <person name="Richardson P."/>
        </authorList>
    </citation>
    <scope>NUCLEOTIDE SEQUENCE [LARGE SCALE GENOMIC DNA]</scope>
    <source>
        <strain>C6 / ATCC BAA-1332</strain>
    </source>
</reference>
<keyword id="KW-0963">Cytoplasm</keyword>
<keyword id="KW-0489">Methyltransferase</keyword>
<keyword id="KW-0949">S-adenosyl-L-methionine</keyword>
<keyword id="KW-0808">Transferase</keyword>
<keyword id="KW-0819">tRNA processing</keyword>
<sequence>MKEFIIKANKAVTNGEINLKDLPGSSGRLDLLCRCVNSAFFLSHDMRRDTIFYSVNYGSPNPPVALKFVGSELKRVSPDERSIALFIKKALEKDASDLWKESTSGIYSSKREFRDIISEKKSEGKRIFYLHLNGKPLEDFEFKDDEDFLFVLGDHIGIGDEDEEFLEELGAEKISLSPLELHADHCIILVHNILDRLK</sequence>
<dbReference type="EC" id="2.1.1.257" evidence="1"/>
<dbReference type="EMBL" id="CP000867">
    <property type="protein sequence ID" value="ABX02543.1"/>
    <property type="molecule type" value="Genomic_DNA"/>
</dbReference>
<dbReference type="SMR" id="A9AB20"/>
<dbReference type="STRING" id="444158.MmarC6_1731"/>
<dbReference type="KEGG" id="mmx:MmarC6_1731"/>
<dbReference type="eggNOG" id="arCOG01239">
    <property type="taxonomic scope" value="Archaea"/>
</dbReference>
<dbReference type="HOGENOM" id="CLU_107018_0_0_2"/>
<dbReference type="OrthoDB" id="27492at2157"/>
<dbReference type="PhylomeDB" id="A9AB20"/>
<dbReference type="GO" id="GO:0005737">
    <property type="term" value="C:cytoplasm"/>
    <property type="evidence" value="ECO:0007669"/>
    <property type="project" value="UniProtKB-SubCell"/>
</dbReference>
<dbReference type="GO" id="GO:0008757">
    <property type="term" value="F:S-adenosylmethionine-dependent methyltransferase activity"/>
    <property type="evidence" value="ECO:0007669"/>
    <property type="project" value="UniProtKB-UniRule"/>
</dbReference>
<dbReference type="GO" id="GO:0008175">
    <property type="term" value="F:tRNA methyltransferase activity"/>
    <property type="evidence" value="ECO:0007669"/>
    <property type="project" value="UniProtKB-UniRule"/>
</dbReference>
<dbReference type="GO" id="GO:0030488">
    <property type="term" value="P:tRNA methylation"/>
    <property type="evidence" value="ECO:0007669"/>
    <property type="project" value="UniProtKB-UniRule"/>
</dbReference>
<dbReference type="CDD" id="cd18087">
    <property type="entry name" value="TrmY-like"/>
    <property type="match status" value="1"/>
</dbReference>
<dbReference type="Gene3D" id="3.40.1280.10">
    <property type="match status" value="1"/>
</dbReference>
<dbReference type="HAMAP" id="MF_00587">
    <property type="entry name" value="tRNA_methyltr_TrmY"/>
    <property type="match status" value="1"/>
</dbReference>
<dbReference type="InterPro" id="IPR029028">
    <property type="entry name" value="Alpha/beta_knot_MTases"/>
</dbReference>
<dbReference type="InterPro" id="IPR007158">
    <property type="entry name" value="TrmY"/>
</dbReference>
<dbReference type="InterPro" id="IPR029026">
    <property type="entry name" value="tRNA_m1G_MTases_N"/>
</dbReference>
<dbReference type="NCBIfam" id="NF002560">
    <property type="entry name" value="PRK02135.1"/>
    <property type="match status" value="1"/>
</dbReference>
<dbReference type="PANTHER" id="PTHR40703">
    <property type="entry name" value="TRNA (PSEUDOURIDINE(54)-N(1))-METHYLTRANSFERASE"/>
    <property type="match status" value="1"/>
</dbReference>
<dbReference type="PANTHER" id="PTHR40703:SF1">
    <property type="entry name" value="TRNA (PSEUDOURIDINE(54)-N(1))-METHYLTRANSFERASE"/>
    <property type="match status" value="1"/>
</dbReference>
<dbReference type="Pfam" id="PF04013">
    <property type="entry name" value="Methyltrn_RNA_2"/>
    <property type="match status" value="1"/>
</dbReference>
<dbReference type="SUPFAM" id="SSF75217">
    <property type="entry name" value="alpha/beta knot"/>
    <property type="match status" value="1"/>
</dbReference>
<evidence type="ECO:0000255" key="1">
    <source>
        <dbReference type="HAMAP-Rule" id="MF_00587"/>
    </source>
</evidence>
<organism>
    <name type="scientific">Methanococcus maripaludis (strain C6 / ATCC BAA-1332)</name>
    <dbReference type="NCBI Taxonomy" id="444158"/>
    <lineage>
        <taxon>Archaea</taxon>
        <taxon>Methanobacteriati</taxon>
        <taxon>Methanobacteriota</taxon>
        <taxon>Methanomada group</taxon>
        <taxon>Methanococci</taxon>
        <taxon>Methanococcales</taxon>
        <taxon>Methanococcaceae</taxon>
        <taxon>Methanococcus</taxon>
    </lineage>
</organism>
<proteinExistence type="inferred from homology"/>